<name>LPAAT_ORYSJ</name>
<accession>Q0J0A4</accession>
<accession>Q650U5</accession>
<proteinExistence type="inferred from homology"/>
<organism>
    <name type="scientific">Oryza sativa subsp. japonica</name>
    <name type="common">Rice</name>
    <dbReference type="NCBI Taxonomy" id="39947"/>
    <lineage>
        <taxon>Eukaryota</taxon>
        <taxon>Viridiplantae</taxon>
        <taxon>Streptophyta</taxon>
        <taxon>Embryophyta</taxon>
        <taxon>Tracheophyta</taxon>
        <taxon>Spermatophyta</taxon>
        <taxon>Magnoliopsida</taxon>
        <taxon>Liliopsida</taxon>
        <taxon>Poales</taxon>
        <taxon>Poaceae</taxon>
        <taxon>BOP clade</taxon>
        <taxon>Oryzoideae</taxon>
        <taxon>Oryzeae</taxon>
        <taxon>Oryzinae</taxon>
        <taxon>Oryza</taxon>
        <taxon>Oryza sativa</taxon>
    </lineage>
</organism>
<protein>
    <recommendedName>
        <fullName>Probable 1-acylglycerol-3-phosphate O-acyltransferase</fullName>
        <ecNumber>2.3.1.51</ecNumber>
    </recommendedName>
    <alternativeName>
        <fullName>Lipid droplet-binding protein CGI-58 homolog</fullName>
    </alternativeName>
</protein>
<comment type="function">
    <text evidence="1">Lysophosphatidic acid acyltransferase which functions in phosphatidic acid biosynthesis. May regulate neutral lipid accumulation and participate in the regulation of lipid turnover in vegetative cells. May possess additional triacylglycerol lipase and phospholipase A2 activities in vitro (By similarity).</text>
</comment>
<comment type="catalytic activity">
    <reaction>
        <text>a 1-acyl-sn-glycero-3-phosphate + an acyl-CoA = a 1,2-diacyl-sn-glycero-3-phosphate + CoA</text>
        <dbReference type="Rhea" id="RHEA:19709"/>
        <dbReference type="ChEBI" id="CHEBI:57287"/>
        <dbReference type="ChEBI" id="CHEBI:57970"/>
        <dbReference type="ChEBI" id="CHEBI:58342"/>
        <dbReference type="ChEBI" id="CHEBI:58608"/>
        <dbReference type="EC" id="2.3.1.51"/>
    </reaction>
</comment>
<comment type="subcellular location">
    <subcellularLocation>
        <location evidence="1">Cytoplasm</location>
    </subcellularLocation>
</comment>
<comment type="domain">
    <text evidence="1">The HXXXXD motif is essential for acyltransferase activity and may constitute the binding site for the phosphate moiety of the glycerol-3-phosphate.</text>
</comment>
<comment type="similarity">
    <text evidence="3">Belongs to the peptidase S33 family. ABHD4/ABHD5 subfamily.</text>
</comment>
<comment type="sequence caution" evidence="3">
    <conflict type="erroneous gene model prediction">
        <sequence resource="EMBL-CDS" id="BAD46672"/>
    </conflict>
</comment>
<comment type="sequence caution" evidence="3">
    <conflict type="erroneous gene model prediction">
        <sequence resource="EMBL-CDS" id="BAF25611"/>
    </conflict>
</comment>
<dbReference type="EC" id="2.3.1.51"/>
<dbReference type="EMBL" id="AP006175">
    <property type="protein sequence ID" value="BAD46672.1"/>
    <property type="status" value="ALT_SEQ"/>
    <property type="molecule type" value="Genomic_DNA"/>
</dbReference>
<dbReference type="EMBL" id="AP008215">
    <property type="protein sequence ID" value="BAF25611.2"/>
    <property type="status" value="ALT_SEQ"/>
    <property type="molecule type" value="Genomic_DNA"/>
</dbReference>
<dbReference type="EMBL" id="AP014965">
    <property type="status" value="NOT_ANNOTATED_CDS"/>
    <property type="molecule type" value="Genomic_DNA"/>
</dbReference>
<dbReference type="RefSeq" id="XP_015651253.1">
    <property type="nucleotide sequence ID" value="XM_015795767.1"/>
</dbReference>
<dbReference type="SMR" id="Q0J0A4"/>
<dbReference type="FunCoup" id="Q0J0A4">
    <property type="interactions" value="2255"/>
</dbReference>
<dbReference type="STRING" id="39947.Q0J0A4"/>
<dbReference type="ESTHER" id="orysa-Q0J0A4">
    <property type="family name" value="CGI-58_ABHD5_ABHD4"/>
</dbReference>
<dbReference type="PaxDb" id="39947-Q0J0A4"/>
<dbReference type="KEGG" id="dosa:Os09g0520200"/>
<dbReference type="eggNOG" id="KOG4409">
    <property type="taxonomic scope" value="Eukaryota"/>
</dbReference>
<dbReference type="InParanoid" id="Q0J0A4"/>
<dbReference type="OrthoDB" id="7457040at2759"/>
<dbReference type="Proteomes" id="UP000000763">
    <property type="component" value="Chromosome 9"/>
</dbReference>
<dbReference type="Proteomes" id="UP000059680">
    <property type="component" value="Chromosome 9"/>
</dbReference>
<dbReference type="GO" id="GO:0005737">
    <property type="term" value="C:cytoplasm"/>
    <property type="evidence" value="ECO:0007669"/>
    <property type="project" value="UniProtKB-SubCell"/>
</dbReference>
<dbReference type="GO" id="GO:0003841">
    <property type="term" value="F:1-acylglycerol-3-phosphate O-acyltransferase activity"/>
    <property type="evidence" value="ECO:0007669"/>
    <property type="project" value="UniProtKB-EC"/>
</dbReference>
<dbReference type="GO" id="GO:0052689">
    <property type="term" value="F:carboxylic ester hydrolase activity"/>
    <property type="evidence" value="ECO:0000318"/>
    <property type="project" value="GO_Central"/>
</dbReference>
<dbReference type="GO" id="GO:0042171">
    <property type="term" value="F:lysophosphatidic acid acyltransferase activity"/>
    <property type="evidence" value="ECO:0000318"/>
    <property type="project" value="GO_Central"/>
</dbReference>
<dbReference type="GO" id="GO:0004623">
    <property type="term" value="F:phospholipase A2 activity"/>
    <property type="evidence" value="ECO:0000318"/>
    <property type="project" value="GO_Central"/>
</dbReference>
<dbReference type="GO" id="GO:0055088">
    <property type="term" value="P:lipid homeostasis"/>
    <property type="evidence" value="ECO:0000318"/>
    <property type="project" value="GO_Central"/>
</dbReference>
<dbReference type="GO" id="GO:0006654">
    <property type="term" value="P:phosphatidic acid biosynthetic process"/>
    <property type="evidence" value="ECO:0000318"/>
    <property type="project" value="GO_Central"/>
</dbReference>
<dbReference type="FunFam" id="3.40.50.1820:FF:000124">
    <property type="entry name" value="Probable 1-acylglycerol-3-phosphate O-acyltransferase"/>
    <property type="match status" value="1"/>
</dbReference>
<dbReference type="Gene3D" id="3.40.50.1820">
    <property type="entry name" value="alpha/beta hydrolase"/>
    <property type="match status" value="1"/>
</dbReference>
<dbReference type="InterPro" id="IPR000073">
    <property type="entry name" value="AB_hydrolase_1"/>
</dbReference>
<dbReference type="InterPro" id="IPR029058">
    <property type="entry name" value="AB_hydrolase_fold"/>
</dbReference>
<dbReference type="InterPro" id="IPR000639">
    <property type="entry name" value="Epox_hydrolase-like"/>
</dbReference>
<dbReference type="PANTHER" id="PTHR42886:SF29">
    <property type="entry name" value="PUMMELIG, ISOFORM A"/>
    <property type="match status" value="1"/>
</dbReference>
<dbReference type="PANTHER" id="PTHR42886">
    <property type="entry name" value="RE40534P-RELATED"/>
    <property type="match status" value="1"/>
</dbReference>
<dbReference type="Pfam" id="PF00561">
    <property type="entry name" value="Abhydrolase_1"/>
    <property type="match status" value="1"/>
</dbReference>
<dbReference type="PRINTS" id="PR00111">
    <property type="entry name" value="ABHYDROLASE"/>
</dbReference>
<dbReference type="PRINTS" id="PR00412">
    <property type="entry name" value="EPOXHYDRLASE"/>
</dbReference>
<dbReference type="SUPFAM" id="SSF53474">
    <property type="entry name" value="alpha/beta-Hydrolases"/>
    <property type="match status" value="1"/>
</dbReference>
<gene>
    <name type="ordered locus">Os09g0520200</name>
    <name type="ordered locus">LOC_Os09g34860</name>
    <name type="ORF">P0669G04.7</name>
</gene>
<sequence>MRRAAAAAVTVTTTTRMAAEGMSTAAAAAEATATAAPAAGSRWGRAWPSALRWIPTSTDRIIAAEKRLLSIVKTGYVQEQVNIGSSPPGSKVRWFRSSSDEPRFINTVTFDSEENAPTLVMVHGYGASQGFFFRNFDALASRFRVIAIDQLGWGGSSRPDFTCKSTEETEAWFIDSFEEWRKAKNLSNFILLGHSFGGYVAAKYALQHPEHVQHLILVGPAGFSSETEHSSEWLTKFRATWKGMLVNHLWESNFTPQRIVRGLGPWGPGLVQRYTSARFGSHSTGELLTEQESTLLTDYIYHTLAAKASGELCLKHIFSFGAFVRKPLLQSASDWKVPTTFIYGQQDWMNYQGAQQARKEMKVPCEIIRVPQGGHFVFIDNPSGFHSAVFHACRKFLSGDGEEGLSLPEGLTSA</sequence>
<feature type="chain" id="PRO_0000430170" description="Probable 1-acylglycerol-3-phosphate O-acyltransferase">
    <location>
        <begin position="1"/>
        <end position="414"/>
    </location>
</feature>
<feature type="domain" description="AB hydrolase-1" evidence="2">
    <location>
        <begin position="117"/>
        <end position="382"/>
    </location>
</feature>
<feature type="short sequence motif" description="GXSXG">
    <location>
        <begin position="193"/>
        <end position="197"/>
    </location>
</feature>
<feature type="short sequence motif" description="HXXXXD motif">
    <location>
        <begin position="375"/>
        <end position="380"/>
    </location>
</feature>
<keyword id="KW-0012">Acyltransferase</keyword>
<keyword id="KW-0963">Cytoplasm</keyword>
<keyword id="KW-0444">Lipid biosynthesis</keyword>
<keyword id="KW-0443">Lipid metabolism</keyword>
<keyword id="KW-0594">Phospholipid biosynthesis</keyword>
<keyword id="KW-1208">Phospholipid metabolism</keyword>
<keyword id="KW-1185">Reference proteome</keyword>
<keyword id="KW-0808">Transferase</keyword>
<evidence type="ECO:0000250" key="1"/>
<evidence type="ECO:0000255" key="2"/>
<evidence type="ECO:0000305" key="3"/>
<reference key="1">
    <citation type="journal article" date="2005" name="Nature">
        <title>The map-based sequence of the rice genome.</title>
        <authorList>
            <consortium name="International rice genome sequencing project (IRGSP)"/>
        </authorList>
    </citation>
    <scope>NUCLEOTIDE SEQUENCE [LARGE SCALE GENOMIC DNA]</scope>
    <source>
        <strain>cv. Nipponbare</strain>
    </source>
</reference>
<reference key="2">
    <citation type="journal article" date="2008" name="Nucleic Acids Res.">
        <title>The rice annotation project database (RAP-DB): 2008 update.</title>
        <authorList>
            <consortium name="The rice annotation project (RAP)"/>
        </authorList>
    </citation>
    <scope>GENOME REANNOTATION</scope>
    <source>
        <strain>cv. Nipponbare</strain>
    </source>
</reference>
<reference key="3">
    <citation type="journal article" date="2013" name="Rice">
        <title>Improvement of the Oryza sativa Nipponbare reference genome using next generation sequence and optical map data.</title>
        <authorList>
            <person name="Kawahara Y."/>
            <person name="de la Bastide M."/>
            <person name="Hamilton J.P."/>
            <person name="Kanamori H."/>
            <person name="McCombie W.R."/>
            <person name="Ouyang S."/>
            <person name="Schwartz D.C."/>
            <person name="Tanaka T."/>
            <person name="Wu J."/>
            <person name="Zhou S."/>
            <person name="Childs K.L."/>
            <person name="Davidson R.M."/>
            <person name="Lin H."/>
            <person name="Quesada-Ocampo L."/>
            <person name="Vaillancourt B."/>
            <person name="Sakai H."/>
            <person name="Lee S.S."/>
            <person name="Kim J."/>
            <person name="Numa H."/>
            <person name="Itoh T."/>
            <person name="Buell C.R."/>
            <person name="Matsumoto T."/>
        </authorList>
    </citation>
    <scope>GENOME REANNOTATION</scope>
    <source>
        <strain>cv. Nipponbare</strain>
    </source>
</reference>